<comment type="function">
    <text evidence="1">Cell wall formation.</text>
</comment>
<comment type="catalytic activity">
    <reaction evidence="1">
        <text>UDP-N-acetyl-alpha-D-muramate + L-alanine + ATP = UDP-N-acetyl-alpha-D-muramoyl-L-alanine + ADP + phosphate + H(+)</text>
        <dbReference type="Rhea" id="RHEA:23372"/>
        <dbReference type="ChEBI" id="CHEBI:15378"/>
        <dbReference type="ChEBI" id="CHEBI:30616"/>
        <dbReference type="ChEBI" id="CHEBI:43474"/>
        <dbReference type="ChEBI" id="CHEBI:57972"/>
        <dbReference type="ChEBI" id="CHEBI:70757"/>
        <dbReference type="ChEBI" id="CHEBI:83898"/>
        <dbReference type="ChEBI" id="CHEBI:456216"/>
        <dbReference type="EC" id="6.3.2.8"/>
    </reaction>
</comment>
<comment type="pathway">
    <text evidence="1">Cell wall biogenesis; peptidoglycan biosynthesis.</text>
</comment>
<comment type="subcellular location">
    <subcellularLocation>
        <location evidence="1">Cytoplasm</location>
    </subcellularLocation>
</comment>
<comment type="similarity">
    <text evidence="1">Belongs to the MurCDEF family.</text>
</comment>
<reference key="1">
    <citation type="submission" date="2007-03" db="EMBL/GenBank/DDBJ databases">
        <title>Complete sequence of Shewanella loihica PV-4.</title>
        <authorList>
            <consortium name="US DOE Joint Genome Institute"/>
            <person name="Copeland A."/>
            <person name="Lucas S."/>
            <person name="Lapidus A."/>
            <person name="Barry K."/>
            <person name="Detter J.C."/>
            <person name="Glavina del Rio T."/>
            <person name="Hammon N."/>
            <person name="Israni S."/>
            <person name="Dalin E."/>
            <person name="Tice H."/>
            <person name="Pitluck S."/>
            <person name="Chain P."/>
            <person name="Malfatti S."/>
            <person name="Shin M."/>
            <person name="Vergez L."/>
            <person name="Schmutz J."/>
            <person name="Larimer F."/>
            <person name="Land M."/>
            <person name="Hauser L."/>
            <person name="Kyrpides N."/>
            <person name="Mikhailova N."/>
            <person name="Romine M.F."/>
            <person name="Serres G."/>
            <person name="Fredrickson J."/>
            <person name="Tiedje J."/>
            <person name="Richardson P."/>
        </authorList>
    </citation>
    <scope>NUCLEOTIDE SEQUENCE [LARGE SCALE GENOMIC DNA]</scope>
    <source>
        <strain>ATCC BAA-1088 / PV-4</strain>
    </source>
</reference>
<organism>
    <name type="scientific">Shewanella loihica (strain ATCC BAA-1088 / PV-4)</name>
    <dbReference type="NCBI Taxonomy" id="323850"/>
    <lineage>
        <taxon>Bacteria</taxon>
        <taxon>Pseudomonadati</taxon>
        <taxon>Pseudomonadota</taxon>
        <taxon>Gammaproteobacteria</taxon>
        <taxon>Alteromonadales</taxon>
        <taxon>Shewanellaceae</taxon>
        <taxon>Shewanella</taxon>
    </lineage>
</organism>
<protein>
    <recommendedName>
        <fullName evidence="1">UDP-N-acetylmuramate--L-alanine ligase</fullName>
        <ecNumber evidence="1">6.3.2.8</ecNumber>
    </recommendedName>
    <alternativeName>
        <fullName evidence="1">UDP-N-acetylmuramoyl-L-alanine synthetase</fullName>
    </alternativeName>
</protein>
<accession>A3QIM0</accession>
<dbReference type="EC" id="6.3.2.8" evidence="1"/>
<dbReference type="EMBL" id="CP000606">
    <property type="protein sequence ID" value="ABO25318.1"/>
    <property type="molecule type" value="Genomic_DNA"/>
</dbReference>
<dbReference type="RefSeq" id="WP_011867248.1">
    <property type="nucleotide sequence ID" value="NC_009092.1"/>
</dbReference>
<dbReference type="SMR" id="A3QIM0"/>
<dbReference type="STRING" id="323850.Shew_3452"/>
<dbReference type="KEGG" id="slo:Shew_3452"/>
<dbReference type="eggNOG" id="COG0773">
    <property type="taxonomic scope" value="Bacteria"/>
</dbReference>
<dbReference type="HOGENOM" id="CLU_028104_2_2_6"/>
<dbReference type="OrthoDB" id="9804126at2"/>
<dbReference type="UniPathway" id="UPA00219"/>
<dbReference type="Proteomes" id="UP000001558">
    <property type="component" value="Chromosome"/>
</dbReference>
<dbReference type="GO" id="GO:0005737">
    <property type="term" value="C:cytoplasm"/>
    <property type="evidence" value="ECO:0007669"/>
    <property type="project" value="UniProtKB-SubCell"/>
</dbReference>
<dbReference type="GO" id="GO:0005524">
    <property type="term" value="F:ATP binding"/>
    <property type="evidence" value="ECO:0007669"/>
    <property type="project" value="UniProtKB-UniRule"/>
</dbReference>
<dbReference type="GO" id="GO:0008763">
    <property type="term" value="F:UDP-N-acetylmuramate-L-alanine ligase activity"/>
    <property type="evidence" value="ECO:0007669"/>
    <property type="project" value="UniProtKB-UniRule"/>
</dbReference>
<dbReference type="GO" id="GO:0051301">
    <property type="term" value="P:cell division"/>
    <property type="evidence" value="ECO:0007669"/>
    <property type="project" value="UniProtKB-KW"/>
</dbReference>
<dbReference type="GO" id="GO:0071555">
    <property type="term" value="P:cell wall organization"/>
    <property type="evidence" value="ECO:0007669"/>
    <property type="project" value="UniProtKB-KW"/>
</dbReference>
<dbReference type="GO" id="GO:0009252">
    <property type="term" value="P:peptidoglycan biosynthetic process"/>
    <property type="evidence" value="ECO:0007669"/>
    <property type="project" value="UniProtKB-UniRule"/>
</dbReference>
<dbReference type="GO" id="GO:0008360">
    <property type="term" value="P:regulation of cell shape"/>
    <property type="evidence" value="ECO:0007669"/>
    <property type="project" value="UniProtKB-KW"/>
</dbReference>
<dbReference type="FunFam" id="3.40.1190.10:FF:000001">
    <property type="entry name" value="UDP-N-acetylmuramate--L-alanine ligase"/>
    <property type="match status" value="1"/>
</dbReference>
<dbReference type="FunFam" id="3.40.50.720:FF:000046">
    <property type="entry name" value="UDP-N-acetylmuramate--L-alanine ligase"/>
    <property type="match status" value="1"/>
</dbReference>
<dbReference type="Gene3D" id="3.90.190.20">
    <property type="entry name" value="Mur ligase, C-terminal domain"/>
    <property type="match status" value="1"/>
</dbReference>
<dbReference type="Gene3D" id="3.40.1190.10">
    <property type="entry name" value="Mur-like, catalytic domain"/>
    <property type="match status" value="1"/>
</dbReference>
<dbReference type="Gene3D" id="3.40.50.720">
    <property type="entry name" value="NAD(P)-binding Rossmann-like Domain"/>
    <property type="match status" value="1"/>
</dbReference>
<dbReference type="HAMAP" id="MF_00046">
    <property type="entry name" value="MurC"/>
    <property type="match status" value="1"/>
</dbReference>
<dbReference type="InterPro" id="IPR036565">
    <property type="entry name" value="Mur-like_cat_sf"/>
</dbReference>
<dbReference type="InterPro" id="IPR004101">
    <property type="entry name" value="Mur_ligase_C"/>
</dbReference>
<dbReference type="InterPro" id="IPR036615">
    <property type="entry name" value="Mur_ligase_C_dom_sf"/>
</dbReference>
<dbReference type="InterPro" id="IPR013221">
    <property type="entry name" value="Mur_ligase_cen"/>
</dbReference>
<dbReference type="InterPro" id="IPR000713">
    <property type="entry name" value="Mur_ligase_N"/>
</dbReference>
<dbReference type="InterPro" id="IPR050061">
    <property type="entry name" value="MurCDEF_pg_biosynth"/>
</dbReference>
<dbReference type="InterPro" id="IPR005758">
    <property type="entry name" value="UDP-N-AcMur_Ala_ligase_MurC"/>
</dbReference>
<dbReference type="NCBIfam" id="TIGR01082">
    <property type="entry name" value="murC"/>
    <property type="match status" value="1"/>
</dbReference>
<dbReference type="PANTHER" id="PTHR43445:SF3">
    <property type="entry name" value="UDP-N-ACETYLMURAMATE--L-ALANINE LIGASE"/>
    <property type="match status" value="1"/>
</dbReference>
<dbReference type="PANTHER" id="PTHR43445">
    <property type="entry name" value="UDP-N-ACETYLMURAMATE--L-ALANINE LIGASE-RELATED"/>
    <property type="match status" value="1"/>
</dbReference>
<dbReference type="Pfam" id="PF01225">
    <property type="entry name" value="Mur_ligase"/>
    <property type="match status" value="1"/>
</dbReference>
<dbReference type="Pfam" id="PF02875">
    <property type="entry name" value="Mur_ligase_C"/>
    <property type="match status" value="1"/>
</dbReference>
<dbReference type="Pfam" id="PF08245">
    <property type="entry name" value="Mur_ligase_M"/>
    <property type="match status" value="1"/>
</dbReference>
<dbReference type="SUPFAM" id="SSF51984">
    <property type="entry name" value="MurCD N-terminal domain"/>
    <property type="match status" value="1"/>
</dbReference>
<dbReference type="SUPFAM" id="SSF53623">
    <property type="entry name" value="MurD-like peptide ligases, catalytic domain"/>
    <property type="match status" value="1"/>
</dbReference>
<dbReference type="SUPFAM" id="SSF53244">
    <property type="entry name" value="MurD-like peptide ligases, peptide-binding domain"/>
    <property type="match status" value="1"/>
</dbReference>
<name>MURC_SHELP</name>
<sequence>MIKTEEKYAQLRTIIPEMRRVKRIHFVGIGGAGMGGIAEVLVNEGYRLSGSDIAENAVTARLKRLGAAIFIGHSADQVEGADVVVVSTAIDASNPEILAAQERRIPIVRRAEMLAELMRYRHGVAVAGTHGKTTTTSLIASVYGQAERDPTFVIGGLLNSAGTNARLGKSRYLIAEADESDASFLHLQPMVSVVTNIEADHMDTYEGDFEKLKSTFVDFLHNLPFYGVAVACIDDPVVREILPRIGRKVVTYGFSEDADVQALNFEQQGYSSRFTVRREGMADLDLRVNLPGRHNVLNALAAIAVATEDEIEDEAIIRALDEFQGIGRRFQQLGEFTTTAGEVMLVDDYGHHPSEVAATIKAARSGWPDKRLVMIYQPHRYSRTRDLYDDFVEVLAQVDCLLLLDVYSAGEAPVPGADSRALCRSIRQRGQLDPIFVAEPEQLQTILPGVLQGGDLLLTQGAGNIGALSRQLADAGLQFESENQ</sequence>
<proteinExistence type="inferred from homology"/>
<keyword id="KW-0067">ATP-binding</keyword>
<keyword id="KW-0131">Cell cycle</keyword>
<keyword id="KW-0132">Cell division</keyword>
<keyword id="KW-0133">Cell shape</keyword>
<keyword id="KW-0961">Cell wall biogenesis/degradation</keyword>
<keyword id="KW-0963">Cytoplasm</keyword>
<keyword id="KW-0436">Ligase</keyword>
<keyword id="KW-0547">Nucleotide-binding</keyword>
<keyword id="KW-0573">Peptidoglycan synthesis</keyword>
<keyword id="KW-1185">Reference proteome</keyword>
<evidence type="ECO:0000255" key="1">
    <source>
        <dbReference type="HAMAP-Rule" id="MF_00046"/>
    </source>
</evidence>
<feature type="chain" id="PRO_1000004407" description="UDP-N-acetylmuramate--L-alanine ligase">
    <location>
        <begin position="1"/>
        <end position="484"/>
    </location>
</feature>
<feature type="binding site" evidence="1">
    <location>
        <begin position="128"/>
        <end position="134"/>
    </location>
    <ligand>
        <name>ATP</name>
        <dbReference type="ChEBI" id="CHEBI:30616"/>
    </ligand>
</feature>
<gene>
    <name evidence="1" type="primary">murC</name>
    <name type="ordered locus">Shew_3452</name>
</gene>